<evidence type="ECO:0000250" key="1">
    <source>
        <dbReference type="UniProtKB" id="P07911"/>
    </source>
</evidence>
<evidence type="ECO:0000250" key="2">
    <source>
        <dbReference type="UniProtKB" id="Q91X17"/>
    </source>
</evidence>
<evidence type="ECO:0000255" key="3"/>
<evidence type="ECO:0000255" key="4">
    <source>
        <dbReference type="PROSITE-ProRule" id="PRU00076"/>
    </source>
</evidence>
<evidence type="ECO:0000255" key="5">
    <source>
        <dbReference type="PROSITE-ProRule" id="PRU00375"/>
    </source>
</evidence>
<gene>
    <name type="primary">UMOD</name>
</gene>
<keyword id="KW-0106">Calcium</keyword>
<keyword id="KW-1003">Cell membrane</keyword>
<keyword id="KW-0966">Cell projection</keyword>
<keyword id="KW-1015">Disulfide bond</keyword>
<keyword id="KW-0245">EGF-like domain</keyword>
<keyword id="KW-0325">Glycoprotein</keyword>
<keyword id="KW-0336">GPI-anchor</keyword>
<keyword id="KW-0391">Immunity</keyword>
<keyword id="KW-0399">Innate immunity</keyword>
<keyword id="KW-0449">Lipoprotein</keyword>
<keyword id="KW-0472">Membrane</keyword>
<keyword id="KW-1185">Reference proteome</keyword>
<keyword id="KW-0677">Repeat</keyword>
<keyword id="KW-0964">Secreted</keyword>
<keyword id="KW-0732">Signal</keyword>
<accession>Q5R5C1</accession>
<feature type="signal peptide" evidence="1">
    <location>
        <begin position="1"/>
        <end position="24"/>
    </location>
</feature>
<feature type="chain" id="PRO_0000228125" description="Uromodulin">
    <location>
        <begin position="25"/>
        <end position="614"/>
    </location>
</feature>
<feature type="chain" id="PRO_0000407911" description="Uromodulin, secreted form">
    <location>
        <begin position="25"/>
        <end position="587"/>
    </location>
</feature>
<feature type="propeptide" id="PRO_0000228126" description="Removed in mature form" evidence="3">
    <location>
        <begin position="615"/>
        <end position="641"/>
    </location>
</feature>
<feature type="domain" description="EGF-like 1" evidence="4">
    <location>
        <begin position="28"/>
        <end position="64"/>
    </location>
</feature>
<feature type="domain" description="EGF-like 2; calcium-binding" evidence="4">
    <location>
        <begin position="65"/>
        <end position="107"/>
    </location>
</feature>
<feature type="domain" description="EGF-like 3; calcium-binding" evidence="4">
    <location>
        <begin position="108"/>
        <end position="149"/>
    </location>
</feature>
<feature type="domain" description="EGF-like 4" evidence="1">
    <location>
        <begin position="292"/>
        <end position="323"/>
    </location>
</feature>
<feature type="domain" description="ZP" evidence="5">
    <location>
        <begin position="334"/>
        <end position="589"/>
    </location>
</feature>
<feature type="region of interest" description="Beta hairpin" evidence="1">
    <location>
        <begin position="150"/>
        <end position="171"/>
    </location>
</feature>
<feature type="region of interest" description="D10C" evidence="1">
    <location>
        <begin position="172"/>
        <end position="291"/>
    </location>
</feature>
<feature type="region of interest" description="ZP-N" evidence="1">
    <location>
        <begin position="334"/>
        <end position="429"/>
    </location>
</feature>
<feature type="region of interest" description="Flexible ZP-N/ZP-C linker; important for secretion and polymerization into filaments" evidence="1">
    <location>
        <begin position="430"/>
        <end position="453"/>
    </location>
</feature>
<feature type="region of interest" description="ZP-C" evidence="1">
    <location>
        <begin position="454"/>
        <end position="589"/>
    </location>
</feature>
<feature type="region of interest" description="Internal hydrophobic patch (IHP)" evidence="1">
    <location>
        <begin position="454"/>
        <end position="464"/>
    </location>
</feature>
<feature type="region of interest" description="Essential for cleavage by HPN" evidence="1">
    <location>
        <begin position="586"/>
        <end position="589"/>
    </location>
</feature>
<feature type="region of interest" description="External hydrophobic patch (EHP); regulates polymerization into filaments" evidence="1">
    <location>
        <begin position="598"/>
        <end position="606"/>
    </location>
</feature>
<feature type="site" description="Cleavage" evidence="1">
    <location>
        <begin position="587"/>
        <end position="588"/>
    </location>
</feature>
<feature type="lipid moiety-binding region" description="GPI-anchor amidated serine" evidence="3">
    <location>
        <position position="614"/>
    </location>
</feature>
<feature type="glycosylation site" description="N-linked (GlcNAc...) asparagine" evidence="3">
    <location>
        <position position="25"/>
    </location>
</feature>
<feature type="glycosylation site" description="N-linked (GlcNAc...) asparagine" evidence="3">
    <location>
        <position position="76"/>
    </location>
</feature>
<feature type="glycosylation site" description="N-linked (GlcNAc...) asparagine" evidence="3">
    <location>
        <position position="232"/>
    </location>
</feature>
<feature type="glycosylation site" description="N-linked (GlcNAc...) asparagine" evidence="3">
    <location>
        <position position="275"/>
    </location>
</feature>
<feature type="glycosylation site" description="N-linked (GlcNAc...) asparagine" evidence="3">
    <location>
        <position position="322"/>
    </location>
</feature>
<feature type="glycosylation site" description="N-linked (GlcNAc...) asparagine" evidence="3">
    <location>
        <position position="447"/>
    </location>
</feature>
<feature type="disulfide bond" evidence="4">
    <location>
        <begin position="32"/>
        <end position="41"/>
    </location>
</feature>
<feature type="disulfide bond" evidence="4">
    <location>
        <begin position="35"/>
        <end position="50"/>
    </location>
</feature>
<feature type="disulfide bond" evidence="4">
    <location>
        <begin position="52"/>
        <end position="63"/>
    </location>
</feature>
<feature type="disulfide bond" evidence="4">
    <location>
        <begin position="69"/>
        <end position="83"/>
    </location>
</feature>
<feature type="disulfide bond" evidence="4">
    <location>
        <begin position="77"/>
        <end position="92"/>
    </location>
</feature>
<feature type="disulfide bond" evidence="4">
    <location>
        <begin position="94"/>
        <end position="106"/>
    </location>
</feature>
<feature type="disulfide bond" evidence="4">
    <location>
        <begin position="112"/>
        <end position="126"/>
    </location>
</feature>
<feature type="disulfide bond" evidence="4">
    <location>
        <begin position="120"/>
        <end position="135"/>
    </location>
</feature>
<feature type="disulfide bond" evidence="4">
    <location>
        <begin position="137"/>
        <end position="148"/>
    </location>
</feature>
<feature type="disulfide bond" evidence="1">
    <location>
        <begin position="150"/>
        <end position="161"/>
    </location>
</feature>
<feature type="disulfide bond" evidence="1">
    <location>
        <begin position="155"/>
        <end position="170"/>
    </location>
</feature>
<feature type="disulfide bond" evidence="1">
    <location>
        <begin position="174"/>
        <end position="267"/>
    </location>
</feature>
<feature type="disulfide bond" evidence="1">
    <location>
        <begin position="195"/>
        <end position="282"/>
    </location>
</feature>
<feature type="disulfide bond" evidence="1">
    <location>
        <begin position="217"/>
        <end position="255"/>
    </location>
</feature>
<feature type="disulfide bond" evidence="1">
    <location>
        <begin position="223"/>
        <end position="287"/>
    </location>
</feature>
<feature type="disulfide bond" evidence="1">
    <location>
        <begin position="248"/>
        <end position="256"/>
    </location>
</feature>
<feature type="disulfide bond" evidence="1">
    <location>
        <begin position="297"/>
        <end position="306"/>
    </location>
</feature>
<feature type="disulfide bond" evidence="1">
    <location>
        <begin position="300"/>
        <end position="315"/>
    </location>
</feature>
<feature type="disulfide bond" evidence="1">
    <location>
        <begin position="317"/>
        <end position="347"/>
    </location>
</feature>
<feature type="disulfide bond" evidence="1">
    <location>
        <begin position="335"/>
        <end position="425"/>
    </location>
</feature>
<feature type="disulfide bond" evidence="1">
    <location>
        <begin position="366"/>
        <end position="389"/>
    </location>
</feature>
<feature type="disulfide bond" evidence="4">
    <location>
        <begin position="506"/>
        <end position="566"/>
    </location>
</feature>
<feature type="disulfide bond" evidence="1">
    <location>
        <begin position="527"/>
        <end position="582"/>
    </location>
</feature>
<feature type="disulfide bond" evidence="1">
    <location>
        <begin position="571"/>
        <end position="578"/>
    </location>
</feature>
<comment type="function">
    <molecule>Uromodulin</molecule>
    <text evidence="1">Functions in biogenesis and organization of the apical membrane of epithelial cells of the thick ascending limb of Henle's loop (TALH), where it promotes formation of complex filamentous gel-like structure that may play a role in the water barrier permeability. May serve as a receptor for binding and endocytosis of cytokines (IL-1, IL-2) and TNF. Facilitates neutrophil migration across renal epithelia.</text>
</comment>
<comment type="function">
    <molecule>Uromodulin, secreted form</molecule>
    <text evidence="2">In the urine, may contribute to colloid osmotic pressure, retards passage of positively charged electrolytes, and inhibits formation of liquid containing supersaturated salts and subsequent formation of salt crystals. Protects against urinary tract infections by binding to type 1 fimbriated E.coli. Binds to bacterial adhesin fimH which mediates the stable formation of bacterial aggregates, prevents the binding of E.coli to uroplakins UPK1A and UPK1B which act as urothelial receptors for type I fimbriae, and allows for pathogen clearance through micturation. Also promotes aggregation of other bacteria including K.pneumoniae, P.aeruginosa and S.mitis and so may also protect against other uropathogens.</text>
</comment>
<comment type="subunit">
    <molecule>Uromodulin, secreted form</molecule>
    <text evidence="1">Homodimer that then polymerizes into long filaments. The filaments can additionally assemble laterally to form a sheet. The filaments consist of a zigzag-shaped backbone with laterally protruding arms which interact with bacterial adhesin fimH. Two fimH molecules can bind to a single UMOD monomer.</text>
</comment>
<comment type="subcellular location">
    <subcellularLocation>
        <location evidence="1">Apical cell membrane</location>
        <topology evidence="1">Lipid-anchor</topology>
        <topology evidence="1">GPI-anchor</topology>
    </subcellularLocation>
    <subcellularLocation>
        <location evidence="1">Basolateral cell membrane</location>
        <topology evidence="1">Lipid-anchor</topology>
        <topology evidence="1">GPI-anchor</topology>
    </subcellularLocation>
    <subcellularLocation>
        <location evidence="1">Cell projection</location>
        <location evidence="1">Cilium membrane</location>
    </subcellularLocation>
    <text evidence="1">Only a small fraction sorts to the basolateral pole of tubular epithelial cells compared to apical localization. Secreted into urine after cleavage. Colocalizes with NPHP1 and KIF3A.</text>
</comment>
<comment type="subcellular location">
    <molecule>Uromodulin, secreted form</molecule>
    <subcellularLocation>
        <location evidence="1">Secreted</location>
    </subcellularLocation>
    <text evidence="1">Detected in urine.</text>
</comment>
<comment type="domain">
    <text evidence="1">The ZP domain mediates polymerization, leading to the formation of long filaments. The core of the filament consists of interlocked ZP domains which assemble into a helical structure. Each ZP domain consists of an N-terminal (ZP-N) and C-terminal (ZP-C) region connected by a flexible linker; the linker allows the ZP domain to wrap around the ZP-C subdomain of the preceding subunit. The heavily glycosylated N-terminal part of the protein (containing several EGF-like domains) forms branches which protrude from the core and are involved in pathogen capture.</text>
</comment>
<comment type="PTM">
    <text evidence="1">N-glycosylated.</text>
</comment>
<comment type="PTM">
    <text evidence="1">Proteolytically cleaved at a conserved C-terminal proteolytic cleavage site to generate the secreted form found in urine. This cleavage is catalyzed by HPN.</text>
</comment>
<organism>
    <name type="scientific">Pongo abelii</name>
    <name type="common">Sumatran orangutan</name>
    <name type="synonym">Pongo pygmaeus abelii</name>
    <dbReference type="NCBI Taxonomy" id="9601"/>
    <lineage>
        <taxon>Eukaryota</taxon>
        <taxon>Metazoa</taxon>
        <taxon>Chordata</taxon>
        <taxon>Craniata</taxon>
        <taxon>Vertebrata</taxon>
        <taxon>Euteleostomi</taxon>
        <taxon>Mammalia</taxon>
        <taxon>Eutheria</taxon>
        <taxon>Euarchontoglires</taxon>
        <taxon>Primates</taxon>
        <taxon>Haplorrhini</taxon>
        <taxon>Catarrhini</taxon>
        <taxon>Hominidae</taxon>
        <taxon>Pongo</taxon>
    </lineage>
</organism>
<dbReference type="EMBL" id="CR860941">
    <property type="protein sequence ID" value="CAH93045.1"/>
    <property type="molecule type" value="mRNA"/>
</dbReference>
<dbReference type="RefSeq" id="NP_001126801.1">
    <property type="nucleotide sequence ID" value="NM_001133329.1"/>
</dbReference>
<dbReference type="SMR" id="Q5R5C1"/>
<dbReference type="FunCoup" id="Q5R5C1">
    <property type="interactions" value="12"/>
</dbReference>
<dbReference type="STRING" id="9601.ENSPPYP00000008090"/>
<dbReference type="GlyCosmos" id="Q5R5C1">
    <property type="glycosylation" value="6 sites, No reported glycans"/>
</dbReference>
<dbReference type="GeneID" id="100173805"/>
<dbReference type="KEGG" id="pon:100173805"/>
<dbReference type="CTD" id="7369"/>
<dbReference type="eggNOG" id="ENOG502QT6B">
    <property type="taxonomic scope" value="Eukaryota"/>
</dbReference>
<dbReference type="HOGENOM" id="CLU_028679_1_0_1"/>
<dbReference type="InParanoid" id="Q5R5C1"/>
<dbReference type="OrthoDB" id="2015116at2759"/>
<dbReference type="TreeFam" id="TF330284"/>
<dbReference type="Proteomes" id="UP000001595">
    <property type="component" value="Unplaced"/>
</dbReference>
<dbReference type="GO" id="GO:0016324">
    <property type="term" value="C:apical plasma membrane"/>
    <property type="evidence" value="ECO:0000250"/>
    <property type="project" value="UniProtKB"/>
</dbReference>
<dbReference type="GO" id="GO:0016323">
    <property type="term" value="C:basolateral plasma membrane"/>
    <property type="evidence" value="ECO:0000250"/>
    <property type="project" value="UniProtKB"/>
</dbReference>
<dbReference type="GO" id="GO:0060170">
    <property type="term" value="C:ciliary membrane"/>
    <property type="evidence" value="ECO:0007669"/>
    <property type="project" value="UniProtKB-SubCell"/>
</dbReference>
<dbReference type="GO" id="GO:0005929">
    <property type="term" value="C:cilium"/>
    <property type="evidence" value="ECO:0000250"/>
    <property type="project" value="UniProtKB"/>
</dbReference>
<dbReference type="GO" id="GO:0005576">
    <property type="term" value="C:extracellular region"/>
    <property type="evidence" value="ECO:0007669"/>
    <property type="project" value="UniProtKB-SubCell"/>
</dbReference>
<dbReference type="GO" id="GO:0016020">
    <property type="term" value="C:membrane"/>
    <property type="evidence" value="ECO:0000250"/>
    <property type="project" value="UniProtKB"/>
</dbReference>
<dbReference type="GO" id="GO:0098552">
    <property type="term" value="C:side of membrane"/>
    <property type="evidence" value="ECO:0007669"/>
    <property type="project" value="UniProtKB-KW"/>
</dbReference>
<dbReference type="GO" id="GO:0000922">
    <property type="term" value="C:spindle pole"/>
    <property type="evidence" value="ECO:0000250"/>
    <property type="project" value="UniProtKB"/>
</dbReference>
<dbReference type="GO" id="GO:0005509">
    <property type="term" value="F:calcium ion binding"/>
    <property type="evidence" value="ECO:0007669"/>
    <property type="project" value="InterPro"/>
</dbReference>
<dbReference type="GO" id="GO:0140367">
    <property type="term" value="P:antibacterial innate immune response"/>
    <property type="evidence" value="ECO:0000250"/>
    <property type="project" value="UniProtKB"/>
</dbReference>
<dbReference type="GO" id="GO:0050829">
    <property type="term" value="P:defense response to Gram-negative bacterium"/>
    <property type="evidence" value="ECO:0000250"/>
    <property type="project" value="UniProtKB"/>
</dbReference>
<dbReference type="CDD" id="cd00054">
    <property type="entry name" value="EGF_CA"/>
    <property type="match status" value="2"/>
</dbReference>
<dbReference type="FunFam" id="2.60.40.4100:FF:000001">
    <property type="entry name" value="alpha-tectorin isoform X1"/>
    <property type="match status" value="1"/>
</dbReference>
<dbReference type="FunFam" id="2.10.25.10:FF:000038">
    <property type="entry name" value="Fibrillin 2"/>
    <property type="match status" value="1"/>
</dbReference>
<dbReference type="FunFam" id="2.60.40.3210:FF:000003">
    <property type="entry name" value="Glycoprotein 2"/>
    <property type="match status" value="1"/>
</dbReference>
<dbReference type="FunFam" id="2.10.25.10:FF:000644">
    <property type="entry name" value="Uromodulin"/>
    <property type="match status" value="1"/>
</dbReference>
<dbReference type="FunFam" id="2.10.25.10:FF:000678">
    <property type="entry name" value="Uromodulin"/>
    <property type="match status" value="1"/>
</dbReference>
<dbReference type="Gene3D" id="2.10.25.10">
    <property type="entry name" value="Laminin"/>
    <property type="match status" value="3"/>
</dbReference>
<dbReference type="Gene3D" id="2.60.40.4100">
    <property type="entry name" value="Zona pellucida, ZP-C domain"/>
    <property type="match status" value="1"/>
</dbReference>
<dbReference type="Gene3D" id="2.60.40.3210">
    <property type="entry name" value="Zona pellucida, ZP-N domain"/>
    <property type="match status" value="1"/>
</dbReference>
<dbReference type="InterPro" id="IPR001881">
    <property type="entry name" value="EGF-like_Ca-bd_dom"/>
</dbReference>
<dbReference type="InterPro" id="IPR000742">
    <property type="entry name" value="EGF-like_dom"/>
</dbReference>
<dbReference type="InterPro" id="IPR000152">
    <property type="entry name" value="EGF-type_Asp/Asn_hydroxyl_site"/>
</dbReference>
<dbReference type="InterPro" id="IPR018097">
    <property type="entry name" value="EGF_Ca-bd_CS"/>
</dbReference>
<dbReference type="InterPro" id="IPR024731">
    <property type="entry name" value="EGF_dom"/>
</dbReference>
<dbReference type="InterPro" id="IPR009030">
    <property type="entry name" value="Growth_fac_rcpt_cys_sf"/>
</dbReference>
<dbReference type="InterPro" id="IPR049883">
    <property type="entry name" value="NOTCH1_EGF-like"/>
</dbReference>
<dbReference type="InterPro" id="IPR055355">
    <property type="entry name" value="ZP-C"/>
</dbReference>
<dbReference type="InterPro" id="IPR042235">
    <property type="entry name" value="ZP-C_dom"/>
</dbReference>
<dbReference type="InterPro" id="IPR055356">
    <property type="entry name" value="ZP-N"/>
</dbReference>
<dbReference type="InterPro" id="IPR048290">
    <property type="entry name" value="ZP_chr"/>
</dbReference>
<dbReference type="InterPro" id="IPR001507">
    <property type="entry name" value="ZP_dom"/>
</dbReference>
<dbReference type="InterPro" id="IPR017977">
    <property type="entry name" value="ZP_dom_CS"/>
</dbReference>
<dbReference type="PANTHER" id="PTHR14002">
    <property type="entry name" value="ENDOGLIN/TGF-BETA RECEPTOR TYPE III"/>
    <property type="match status" value="1"/>
</dbReference>
<dbReference type="PANTHER" id="PTHR14002:SF40">
    <property type="entry name" value="UROMODULIN"/>
    <property type="match status" value="1"/>
</dbReference>
<dbReference type="Pfam" id="PF23283">
    <property type="entry name" value="D8C_UMOD"/>
    <property type="match status" value="1"/>
</dbReference>
<dbReference type="Pfam" id="PF12947">
    <property type="entry name" value="EGF_3"/>
    <property type="match status" value="2"/>
</dbReference>
<dbReference type="Pfam" id="PF07645">
    <property type="entry name" value="EGF_CA"/>
    <property type="match status" value="1"/>
</dbReference>
<dbReference type="Pfam" id="PF00100">
    <property type="entry name" value="Zona_pellucida"/>
    <property type="match status" value="1"/>
</dbReference>
<dbReference type="Pfam" id="PF23344">
    <property type="entry name" value="ZP-N"/>
    <property type="match status" value="1"/>
</dbReference>
<dbReference type="PRINTS" id="PR00023">
    <property type="entry name" value="ZPELLUCIDA"/>
</dbReference>
<dbReference type="SMART" id="SM00181">
    <property type="entry name" value="EGF"/>
    <property type="match status" value="3"/>
</dbReference>
<dbReference type="SMART" id="SM00179">
    <property type="entry name" value="EGF_CA"/>
    <property type="match status" value="2"/>
</dbReference>
<dbReference type="SMART" id="SM00241">
    <property type="entry name" value="ZP"/>
    <property type="match status" value="1"/>
</dbReference>
<dbReference type="SUPFAM" id="SSF57184">
    <property type="entry name" value="Growth factor receptor domain"/>
    <property type="match status" value="1"/>
</dbReference>
<dbReference type="PROSITE" id="PS00010">
    <property type="entry name" value="ASX_HYDROXYL"/>
    <property type="match status" value="2"/>
</dbReference>
<dbReference type="PROSITE" id="PS01186">
    <property type="entry name" value="EGF_2"/>
    <property type="match status" value="3"/>
</dbReference>
<dbReference type="PROSITE" id="PS50026">
    <property type="entry name" value="EGF_3"/>
    <property type="match status" value="3"/>
</dbReference>
<dbReference type="PROSITE" id="PS01187">
    <property type="entry name" value="EGF_CA"/>
    <property type="match status" value="2"/>
</dbReference>
<dbReference type="PROSITE" id="PS00682">
    <property type="entry name" value="ZP_1"/>
    <property type="match status" value="1"/>
</dbReference>
<dbReference type="PROSITE" id="PS51034">
    <property type="entry name" value="ZP_2"/>
    <property type="match status" value="1"/>
</dbReference>
<proteinExistence type="evidence at transcript level"/>
<name>UROM_PONAB</name>
<reference key="1">
    <citation type="submission" date="2004-11" db="EMBL/GenBank/DDBJ databases">
        <authorList>
            <consortium name="The German cDNA consortium"/>
        </authorList>
    </citation>
    <scope>NUCLEOTIDE SEQUENCE [LARGE SCALE MRNA]</scope>
    <source>
        <tissue>Kidney</tissue>
    </source>
</reference>
<sequence length="641" mass="69806">MGQPPLTWMLMVVVASWFITTAATNTSEARWCSECHSNATCTEDEAVTTCTCQEGFTGDGLTCVDLDECAIPGAHNCSANSSCVNTPGSFSCVCPEGFRLSPGLGCTDVDECAEPGLSHCHALATCVNVVGNYLCVCPAGYRGDGWHCECSPGSCGPGLDCVPEGDALVCADPCQAHRTLDEYWRSTEYGEGYACDTDLRGWYRFVGQGGARLAETCVPVLRCNTAAPMWLNGTHPSSDEGIVSRKACAHWSGHCCLWDASVQVKACAGGYYVYNLTAPPECHLAYCTDPSSVEGTCEECSIDEDCKSDNGRWHCQCKQDFNITDISLLEHRLECGANDMKVSLGKCQLKSLGFDKVFMYLSDSRCSGFNDRDNRDWVSVVTPARDGPCGTVLTRNETHATYSNTLYLADEIIIRDRNIKINFACSYPLDMKVSLKTSLQPVVSALNITVGGTGMFTVRMALFQNPSYTQPYQGSSVTLSTEAFLYVGTMLDGGDLSRFALLMTNCYATPSGNATDPLKYFIIQDRCPHTRDSTIQVVENGESSQGRFSVQMFRFAGNYDLVYLHCEVYLCDTMNEKCKPTCSGTRFRSGSVIDQSRVLNLGPITRKGVQATVSRAAFSSLGLLKVWLPLLLSATLTLTFQ</sequence>
<protein>
    <recommendedName>
        <fullName>Uromodulin</fullName>
    </recommendedName>
    <component>
        <recommendedName>
            <fullName>Uromodulin, secreted form</fullName>
        </recommendedName>
    </component>
</protein>